<accession>P19125</accession>
<accession>P74194</accession>
<evidence type="ECO:0000255" key="1">
    <source>
        <dbReference type="HAMAP-Rule" id="MF_01357"/>
    </source>
</evidence>
<evidence type="ECO:0000269" key="2">
    <source>
    </source>
</evidence>
<evidence type="ECO:0000269" key="3">
    <source>
    </source>
</evidence>
<evidence type="ECO:0000305" key="4"/>
<evidence type="ECO:0000305" key="5">
    <source>
    </source>
</evidence>
<protein>
    <recommendedName>
        <fullName evidence="1">NAD(P)H-quinone oxidoreductase subunit J</fullName>
        <ecNumber evidence="1">7.1.1.-</ecNumber>
    </recommendedName>
    <alternativeName>
        <fullName>NAD(P)H dehydrogenase subunit J</fullName>
    </alternativeName>
    <alternativeName>
        <fullName evidence="1">NADH-plastoquinone oxidoreductase subunit J</fullName>
    </alternativeName>
    <alternativeName>
        <fullName evidence="1">NDH-1 subunit J</fullName>
        <shortName evidence="1">NDH-J</shortName>
    </alternativeName>
    <alternativeName>
        <fullName>ORF 155</fullName>
    </alternativeName>
</protein>
<gene>
    <name evidence="1" type="primary">ndhJ</name>
    <name type="ordered locus">slr1281</name>
</gene>
<sequence length="179" mass="20593">MAEEVNSPNEAVNLQEETAIAPVGPVSTWLTTNGFEHQSLTADHLGVEMVQVEADLLLPLCTALYAYGFNYLQCQGAYDEGPGKSLVSFYHLVKLTEDTRNPEEVRLKVFLPRENPVVPSVYWIWKAADWQERECYDMFGIVYEGHPNLKRILMPEDWVGWPLRKDYISPDFYELQDAY</sequence>
<feature type="initiator methionine" description="Removed; partial" evidence="3">
    <location>
        <position position="1"/>
    </location>
</feature>
<feature type="chain" id="PRO_0000118667" description="NAD(P)H-quinone oxidoreductase subunit J">
    <location>
        <begin position="2"/>
        <end position="179"/>
    </location>
</feature>
<dbReference type="EC" id="7.1.1.-" evidence="1"/>
<dbReference type="EMBL" id="X17439">
    <property type="protein sequence ID" value="CAA35486.1"/>
    <property type="status" value="ALT_INIT"/>
    <property type="molecule type" value="Genomic_DNA"/>
</dbReference>
<dbReference type="EMBL" id="BA000022">
    <property type="protein sequence ID" value="BAA18285.1"/>
    <property type="molecule type" value="Genomic_DNA"/>
</dbReference>
<dbReference type="PIR" id="S75826">
    <property type="entry name" value="S75826"/>
</dbReference>
<dbReference type="SMR" id="P19125"/>
<dbReference type="IntAct" id="P19125">
    <property type="interactions" value="11"/>
</dbReference>
<dbReference type="STRING" id="1148.gene:10499161"/>
<dbReference type="PaxDb" id="1148-1653371"/>
<dbReference type="EnsemblBacteria" id="BAA18285">
    <property type="protein sequence ID" value="BAA18285"/>
    <property type="gene ID" value="BAA18285"/>
</dbReference>
<dbReference type="KEGG" id="syn:slr1281"/>
<dbReference type="eggNOG" id="COG0852">
    <property type="taxonomic scope" value="Bacteria"/>
</dbReference>
<dbReference type="InParanoid" id="P19125"/>
<dbReference type="PhylomeDB" id="P19125"/>
<dbReference type="Proteomes" id="UP000001425">
    <property type="component" value="Chromosome"/>
</dbReference>
<dbReference type="GO" id="GO:0031676">
    <property type="term" value="C:plasma membrane-derived thylakoid membrane"/>
    <property type="evidence" value="ECO:0007669"/>
    <property type="project" value="UniProtKB-SubCell"/>
</dbReference>
<dbReference type="GO" id="GO:0008137">
    <property type="term" value="F:NADH dehydrogenase (ubiquinone) activity"/>
    <property type="evidence" value="ECO:0007669"/>
    <property type="project" value="InterPro"/>
</dbReference>
<dbReference type="GO" id="GO:0048038">
    <property type="term" value="F:quinone binding"/>
    <property type="evidence" value="ECO:0007669"/>
    <property type="project" value="UniProtKB-KW"/>
</dbReference>
<dbReference type="GO" id="GO:0019684">
    <property type="term" value="P:photosynthesis, light reaction"/>
    <property type="evidence" value="ECO:0007669"/>
    <property type="project" value="UniProtKB-UniRule"/>
</dbReference>
<dbReference type="Gene3D" id="3.30.460.80">
    <property type="entry name" value="NADH:ubiquinone oxidoreductase, 30kDa subunit"/>
    <property type="match status" value="1"/>
</dbReference>
<dbReference type="HAMAP" id="MF_01357">
    <property type="entry name" value="NDH1_NuoC"/>
    <property type="match status" value="1"/>
</dbReference>
<dbReference type="InterPro" id="IPR010218">
    <property type="entry name" value="NADH_DH_suC"/>
</dbReference>
<dbReference type="InterPro" id="IPR037232">
    <property type="entry name" value="NADH_quin_OxRdtase_su_C/D-like"/>
</dbReference>
<dbReference type="InterPro" id="IPR001268">
    <property type="entry name" value="NADH_UbQ_OxRdtase_30kDa_su"/>
</dbReference>
<dbReference type="InterPro" id="IPR020396">
    <property type="entry name" value="NADH_UbQ_OxRdtase_CS"/>
</dbReference>
<dbReference type="NCBIfam" id="NF009141">
    <property type="entry name" value="PRK12494.1"/>
    <property type="match status" value="1"/>
</dbReference>
<dbReference type="PANTHER" id="PTHR10884:SF14">
    <property type="entry name" value="NADH DEHYDROGENASE [UBIQUINONE] IRON-SULFUR PROTEIN 3, MITOCHONDRIAL"/>
    <property type="match status" value="1"/>
</dbReference>
<dbReference type="PANTHER" id="PTHR10884">
    <property type="entry name" value="NADH DEHYDROGENASE UBIQUINONE IRON-SULFUR PROTEIN 3"/>
    <property type="match status" value="1"/>
</dbReference>
<dbReference type="Pfam" id="PF00329">
    <property type="entry name" value="Complex1_30kDa"/>
    <property type="match status" value="1"/>
</dbReference>
<dbReference type="SUPFAM" id="SSF143243">
    <property type="entry name" value="Nqo5-like"/>
    <property type="match status" value="1"/>
</dbReference>
<dbReference type="PROSITE" id="PS00542">
    <property type="entry name" value="COMPLEX1_30K"/>
    <property type="match status" value="1"/>
</dbReference>
<organism>
    <name type="scientific">Synechocystis sp. (strain ATCC 27184 / PCC 6803 / Kazusa)</name>
    <dbReference type="NCBI Taxonomy" id="1111708"/>
    <lineage>
        <taxon>Bacteria</taxon>
        <taxon>Bacillati</taxon>
        <taxon>Cyanobacteriota</taxon>
        <taxon>Cyanophyceae</taxon>
        <taxon>Synechococcales</taxon>
        <taxon>Merismopediaceae</taxon>
        <taxon>Synechocystis</taxon>
    </lineage>
</organism>
<keyword id="KW-0903">Direct protein sequencing</keyword>
<keyword id="KW-0472">Membrane</keyword>
<keyword id="KW-0520">NAD</keyword>
<keyword id="KW-0521">NADP</keyword>
<keyword id="KW-0618">Plastoquinone</keyword>
<keyword id="KW-0874">Quinone</keyword>
<keyword id="KW-1185">Reference proteome</keyword>
<keyword id="KW-0793">Thylakoid</keyword>
<keyword id="KW-1278">Translocase</keyword>
<keyword id="KW-0813">Transport</keyword>
<proteinExistence type="evidence at protein level"/>
<comment type="function">
    <text evidence="1">NDH-1 shuttles electrons from an unknown electron donor, via FMN and iron-sulfur (Fe-S) centers, to quinones in the respiratory and/or the photosynthetic chain. The immediate electron acceptor for the enzyme in this species is believed to be plastoquinone. Couples the redox reaction to proton translocation, and thus conserves the redox energy in a proton gradient. Cyanobacterial NDH-1 also plays a role in inorganic carbon-concentration.</text>
</comment>
<comment type="catalytic activity">
    <reaction evidence="1">
        <text>a plastoquinone + NADH + (n+1) H(+)(in) = a plastoquinol + NAD(+) + n H(+)(out)</text>
        <dbReference type="Rhea" id="RHEA:42608"/>
        <dbReference type="Rhea" id="RHEA-COMP:9561"/>
        <dbReference type="Rhea" id="RHEA-COMP:9562"/>
        <dbReference type="ChEBI" id="CHEBI:15378"/>
        <dbReference type="ChEBI" id="CHEBI:17757"/>
        <dbReference type="ChEBI" id="CHEBI:57540"/>
        <dbReference type="ChEBI" id="CHEBI:57945"/>
        <dbReference type="ChEBI" id="CHEBI:62192"/>
    </reaction>
</comment>
<comment type="catalytic activity">
    <reaction evidence="1">
        <text>a plastoquinone + NADPH + (n+1) H(+)(in) = a plastoquinol + NADP(+) + n H(+)(out)</text>
        <dbReference type="Rhea" id="RHEA:42612"/>
        <dbReference type="Rhea" id="RHEA-COMP:9561"/>
        <dbReference type="Rhea" id="RHEA-COMP:9562"/>
        <dbReference type="ChEBI" id="CHEBI:15378"/>
        <dbReference type="ChEBI" id="CHEBI:17757"/>
        <dbReference type="ChEBI" id="CHEBI:57783"/>
        <dbReference type="ChEBI" id="CHEBI:58349"/>
        <dbReference type="ChEBI" id="CHEBI:62192"/>
    </reaction>
</comment>
<comment type="subunit">
    <text>NDH-1 can be composed of about 15 different subunits; different subcomplexes with different compositions have been identified which probably have different functions.</text>
</comment>
<comment type="subcellular location">
    <subcellularLocation>
        <location evidence="5">Cellular thylakoid membrane</location>
        <topology evidence="5">Peripheral membrane protein</topology>
        <orientation evidence="5">Cytoplasmic side</orientation>
    </subcellularLocation>
</comment>
<comment type="PTM">
    <text evidence="2">In at one experiment the initiator methionine has been seen to be kept and removed.</text>
</comment>
<comment type="similarity">
    <text evidence="1">Belongs to the complex I 30 kDa subunit family.</text>
</comment>
<comment type="sequence caution" evidence="4">
    <conflict type="erroneous initiation">
        <sequence resource="EMBL-CDS" id="CAA35486"/>
    </conflict>
</comment>
<name>NDHJ_SYNY3</name>
<reference key="1">
    <citation type="journal article" date="1989" name="Mol. Gen. Genet.">
        <title>Characterization of the ndhC-psbG-ORF157/159 operon of maize plastid DNA and of the cyanobacterium Synechocystis sp. PCC6803.</title>
        <authorList>
            <person name="Steinmueller K."/>
            <person name="Ley A.C."/>
            <person name="Steinmetz A.A."/>
            <person name="Sayre R.T."/>
            <person name="Bogorad L."/>
        </authorList>
    </citation>
    <scope>NUCLEOTIDE SEQUENCE [GENOMIC DNA]</scope>
</reference>
<reference key="2">
    <citation type="journal article" date="1996" name="DNA Res.">
        <title>Sequence analysis of the genome of the unicellular cyanobacterium Synechocystis sp. strain PCC6803. II. Sequence determination of the entire genome and assignment of potential protein-coding regions.</title>
        <authorList>
            <person name="Kaneko T."/>
            <person name="Sato S."/>
            <person name="Kotani H."/>
            <person name="Tanaka A."/>
            <person name="Asamizu E."/>
            <person name="Nakamura Y."/>
            <person name="Miyajima N."/>
            <person name="Hirosawa M."/>
            <person name="Sugiura M."/>
            <person name="Sasamoto S."/>
            <person name="Kimura T."/>
            <person name="Hosouchi T."/>
            <person name="Matsuno A."/>
            <person name="Muraki A."/>
            <person name="Nakazaki N."/>
            <person name="Naruo K."/>
            <person name="Okumura S."/>
            <person name="Shimpo S."/>
            <person name="Takeuchi C."/>
            <person name="Wada T."/>
            <person name="Watanabe A."/>
            <person name="Yamada M."/>
            <person name="Yasuda M."/>
            <person name="Tabata S."/>
        </authorList>
    </citation>
    <scope>NUCLEOTIDE SEQUENCE [LARGE SCALE GENOMIC DNA]</scope>
    <source>
        <strain>ATCC 27184 / PCC 6803 / Kazusa</strain>
    </source>
</reference>
<reference key="3">
    <citation type="journal article" date="1993" name="FEBS Lett.">
        <title>Immunopurification of a subcomplex of the NAD(P)H-plastoquinone-oxidoreductase from the cyanobacterium Synechocystis sp. PCC6803.</title>
        <authorList>
            <person name="Berger S."/>
            <person name="Ellersiek U."/>
            <person name="Kinzelt D."/>
            <person name="Steinmueller K."/>
        </authorList>
    </citation>
    <scope>PROTEIN SEQUENCE OF 2-20 AND 23-40</scope>
    <scope>CHARACTERIZATION AS A MEMBER OF THE NAD(P)H-QUINONE OXIDOREDUCTASE COMPLEX</scope>
</reference>
<reference key="4">
    <citation type="journal article" date="2004" name="J. Biol. Chem.">
        <title>Subunit composition of NDH-1 complexes of Synechocystis sp. PCC 6803: identification of two new ndh gene products with nuclear-encoded homologues in the chloroplast Ndh complex.</title>
        <authorList>
            <person name="Prommeenate P."/>
            <person name="Lennon A.M."/>
            <person name="Markert C."/>
            <person name="Hippler M."/>
            <person name="Nixon P.J."/>
        </authorList>
    </citation>
    <scope>PROTEIN SEQUENCE OF 1-9</scope>
    <scope>CHARACTERIZATION AS A MEMBER OF THE NAD(P)H-QUINONE OXIDOREDUCTASE COMPLEX</scope>
    <scope>SUBCOMPLEXES OF NDH-1</scope>
</reference>
<reference key="5">
    <citation type="journal article" date="2005" name="J. Biol. Chem.">
        <title>Identification of NdhL and Ssl1690 (NdhO) in NDH-1L and NDH-1M complexes of Synechocystis sp. PCC 6803.</title>
        <authorList>
            <person name="Battchikova N."/>
            <person name="Zhang P."/>
            <person name="Rudd S."/>
            <person name="Ogawa T."/>
            <person name="Aro E.-M."/>
        </authorList>
    </citation>
    <scope>PROTEIN SEQUENCE OF 85-94; 109-126 AND 152-164</scope>
    <scope>SUBCOMPLEXES OF NDH-1</scope>
</reference>
<reference key="6">
    <citation type="journal article" date="2005" name="Proteomics">
        <title>Proteomic studies of the thylakoid membrane of Synechocystis sp. PCC 6803.</title>
        <authorList>
            <person name="Srivastava R."/>
            <person name="Pisareva T."/>
            <person name="Norling B."/>
        </authorList>
    </citation>
    <scope>SUBCELLULAR LOCATION IN THYLAKOID</scope>
</reference>